<protein>
    <recommendedName>
        <fullName>Oxidant-induced cell-cycle arrest protein 5</fullName>
    </recommendedName>
</protein>
<keyword id="KW-0963">Cytoplasm</keyword>
<keyword id="KW-1185">Reference proteome</keyword>
<feature type="chain" id="PRO_0000408214" description="Oxidant-induced cell-cycle arrest protein 5">
    <location>
        <begin position="1"/>
        <end position="694"/>
    </location>
</feature>
<feature type="domain" description="Rab-GAP TBC">
    <location>
        <begin position="407"/>
        <end position="685"/>
    </location>
</feature>
<feature type="region of interest" description="Disordered" evidence="2">
    <location>
        <begin position="24"/>
        <end position="47"/>
    </location>
</feature>
<feature type="region of interest" description="Disordered" evidence="2">
    <location>
        <begin position="61"/>
        <end position="94"/>
    </location>
</feature>
<feature type="region of interest" description="Disordered" evidence="2">
    <location>
        <begin position="164"/>
        <end position="216"/>
    </location>
</feature>
<feature type="region of interest" description="Disordered" evidence="2">
    <location>
        <begin position="359"/>
        <end position="399"/>
    </location>
</feature>
<feature type="region of interest" description="Disordered" evidence="2">
    <location>
        <begin position="626"/>
        <end position="647"/>
    </location>
</feature>
<feature type="compositionally biased region" description="Low complexity" evidence="2">
    <location>
        <begin position="32"/>
        <end position="47"/>
    </location>
</feature>
<feature type="compositionally biased region" description="Low complexity" evidence="2">
    <location>
        <begin position="172"/>
        <end position="199"/>
    </location>
</feature>
<feature type="compositionally biased region" description="Basic residues" evidence="2">
    <location>
        <begin position="382"/>
        <end position="394"/>
    </location>
</feature>
<feature type="compositionally biased region" description="Low complexity" evidence="2">
    <location>
        <begin position="635"/>
        <end position="646"/>
    </location>
</feature>
<organism>
    <name type="scientific">Lodderomyces elongisporus (strain ATCC 11503 / CBS 2605 / JCM 1781 / NBRC 1676 / NRRL YB-4239)</name>
    <name type="common">Yeast</name>
    <name type="synonym">Saccharomyces elongisporus</name>
    <dbReference type="NCBI Taxonomy" id="379508"/>
    <lineage>
        <taxon>Eukaryota</taxon>
        <taxon>Fungi</taxon>
        <taxon>Dikarya</taxon>
        <taxon>Ascomycota</taxon>
        <taxon>Saccharomycotina</taxon>
        <taxon>Pichiomycetes</taxon>
        <taxon>Debaryomycetaceae</taxon>
        <taxon>Candida/Lodderomyces clade</taxon>
        <taxon>Lodderomyces</taxon>
    </lineage>
</organism>
<dbReference type="EMBL" id="CH981526">
    <property type="protein sequence ID" value="EDK44869.1"/>
    <property type="molecule type" value="Genomic_DNA"/>
</dbReference>
<dbReference type="RefSeq" id="XP_001526490.1">
    <property type="nucleotide sequence ID" value="XM_001526440.1"/>
</dbReference>
<dbReference type="FunCoup" id="A5E0B1">
    <property type="interactions" value="32"/>
</dbReference>
<dbReference type="STRING" id="379508.A5E0B1"/>
<dbReference type="GeneID" id="5233562"/>
<dbReference type="KEGG" id="lel:PVL30_003874"/>
<dbReference type="VEuPathDB" id="FungiDB:LELG_03048"/>
<dbReference type="eggNOG" id="ENOG502QVXN">
    <property type="taxonomic scope" value="Eukaryota"/>
</dbReference>
<dbReference type="HOGENOM" id="CLU_028817_0_0_1"/>
<dbReference type="InParanoid" id="A5E0B1"/>
<dbReference type="OMA" id="LRFKVWP"/>
<dbReference type="OrthoDB" id="27140at2759"/>
<dbReference type="Proteomes" id="UP000001996">
    <property type="component" value="Unassembled WGS sequence"/>
</dbReference>
<dbReference type="GO" id="GO:0070971">
    <property type="term" value="C:endoplasmic reticulum exit site"/>
    <property type="evidence" value="ECO:0007669"/>
    <property type="project" value="TreeGrafter"/>
</dbReference>
<dbReference type="GO" id="GO:0012507">
    <property type="term" value="C:ER to Golgi transport vesicle membrane"/>
    <property type="evidence" value="ECO:0007669"/>
    <property type="project" value="TreeGrafter"/>
</dbReference>
<dbReference type="GO" id="GO:0007030">
    <property type="term" value="P:Golgi organization"/>
    <property type="evidence" value="ECO:0007669"/>
    <property type="project" value="TreeGrafter"/>
</dbReference>
<dbReference type="GO" id="GO:0070973">
    <property type="term" value="P:protein localization to endoplasmic reticulum exit site"/>
    <property type="evidence" value="ECO:0007669"/>
    <property type="project" value="TreeGrafter"/>
</dbReference>
<dbReference type="Gene3D" id="1.10.472.80">
    <property type="entry name" value="Ypt/Rab-GAP domain of gyp1p, domain 3"/>
    <property type="match status" value="1"/>
</dbReference>
<dbReference type="InterPro" id="IPR035969">
    <property type="entry name" value="Rab-GAP_TBC_sf"/>
</dbReference>
<dbReference type="PANTHER" id="PTHR13402">
    <property type="entry name" value="RGPR-RELATED"/>
    <property type="match status" value="1"/>
</dbReference>
<dbReference type="PANTHER" id="PTHR13402:SF6">
    <property type="entry name" value="SECRETORY 16, ISOFORM I"/>
    <property type="match status" value="1"/>
</dbReference>
<dbReference type="SUPFAM" id="SSF47923">
    <property type="entry name" value="Ypt/Rab-GAP domain of gyp1p"/>
    <property type="match status" value="1"/>
</dbReference>
<accession>A5E0B1</accession>
<reference key="1">
    <citation type="journal article" date="2009" name="Nature">
        <title>Evolution of pathogenicity and sexual reproduction in eight Candida genomes.</title>
        <authorList>
            <person name="Butler G."/>
            <person name="Rasmussen M.D."/>
            <person name="Lin M.F."/>
            <person name="Santos M.A.S."/>
            <person name="Sakthikumar S."/>
            <person name="Munro C.A."/>
            <person name="Rheinbay E."/>
            <person name="Grabherr M."/>
            <person name="Forche A."/>
            <person name="Reedy J.L."/>
            <person name="Agrafioti I."/>
            <person name="Arnaud M.B."/>
            <person name="Bates S."/>
            <person name="Brown A.J.P."/>
            <person name="Brunke S."/>
            <person name="Costanzo M.C."/>
            <person name="Fitzpatrick D.A."/>
            <person name="de Groot P.W.J."/>
            <person name="Harris D."/>
            <person name="Hoyer L.L."/>
            <person name="Hube B."/>
            <person name="Klis F.M."/>
            <person name="Kodira C."/>
            <person name="Lennard N."/>
            <person name="Logue M.E."/>
            <person name="Martin R."/>
            <person name="Neiman A.M."/>
            <person name="Nikolaou E."/>
            <person name="Quail M.A."/>
            <person name="Quinn J."/>
            <person name="Santos M.C."/>
            <person name="Schmitzberger F.F."/>
            <person name="Sherlock G."/>
            <person name="Shah P."/>
            <person name="Silverstein K.A.T."/>
            <person name="Skrzypek M.S."/>
            <person name="Soll D."/>
            <person name="Staggs R."/>
            <person name="Stansfield I."/>
            <person name="Stumpf M.P.H."/>
            <person name="Sudbery P.E."/>
            <person name="Srikantha T."/>
            <person name="Zeng Q."/>
            <person name="Berman J."/>
            <person name="Berriman M."/>
            <person name="Heitman J."/>
            <person name="Gow N.A.R."/>
            <person name="Lorenz M.C."/>
            <person name="Birren B.W."/>
            <person name="Kellis M."/>
            <person name="Cuomo C.A."/>
        </authorList>
    </citation>
    <scope>NUCLEOTIDE SEQUENCE [LARGE SCALE GENOMIC DNA]</scope>
    <source>
        <strain>ATCC 11503 / BCRC 21390 / CBS 2605 / JCM 1781 / NBRC 1676 / NRRL YB-4239</strain>
    </source>
</reference>
<name>OCA5_LODEL</name>
<sequence>MQASTISPHLAELEQFNTVNVPESSANINIPSQNSHHQQQQQQQQQQQQQQQQQQQQQQQQQQLQQLQHHNHHQQTSLHPQHTHNGALGYSSLPSEGPKPSFNYDLEIFNLCKQYLNNKNHHGLALIARQKGIPPFLRFKAWPVLLKYHPFVLDPFIQPDNEVINEGNELDSSSSTSSSSSSSSYSSFSKDSGSRNSSSNGTQRLHEQASYNARSDTENRIKKDISRYVQRIFGSLSTELPSLDREILDVIENAVKKFTLKWGKIIKYDLSLLWMALNLAEWIPPLPKTPWVLVGRDQNSHPKLTHNVLDDYTHYIDNIPGLGNYLEELIYNDEHISSLAFHEVYERLVLVLLHCPEPDSRKQTSQNGSTGGKGDVASNDHHNHHNHHHYHHHHQQDQLNKTRLPVTGGTIEERVSFFIFCLRKLLPELSQYFHEEQILSKFGCLDDEWLIWWLKFCGTKAWSKFDRGRIWDFMLGWRLKNPKKNFNYYYEKLNYVNRDTLEKLGPDIFWTLNSEKTERPKMNPRNNSFRDLVHELNCNFHISRADFNQQLQSDSSKSKIVSPASDAPALTIPFSTIDPHVALIFISISLLKSKENTLVELDQHEIRQFLSRLPSKSYEYNHKQRKRLNNNGNDPSSVRSSKPSLPSEEKTLNTIIISNDAQDNKHKINFIDSIINEAGEEWRKWLWTEFVDDG</sequence>
<proteinExistence type="inferred from homology"/>
<comment type="subcellular location">
    <subcellularLocation>
        <location evidence="1">Cytoplasm</location>
    </subcellularLocation>
</comment>
<comment type="similarity">
    <text evidence="3">Belongs to the OCA5 family.</text>
</comment>
<evidence type="ECO:0000250" key="1"/>
<evidence type="ECO:0000256" key="2">
    <source>
        <dbReference type="SAM" id="MobiDB-lite"/>
    </source>
</evidence>
<evidence type="ECO:0000305" key="3"/>
<gene>
    <name type="primary">OCA5</name>
    <name type="ORF">LELG_03048</name>
</gene>